<evidence type="ECO:0000255" key="1">
    <source>
        <dbReference type="HAMAP-Rule" id="MF_01122"/>
    </source>
</evidence>
<organism>
    <name type="scientific">Thermoplasma acidophilum (strain ATCC 25905 / DSM 1728 / JCM 9062 / NBRC 15155 / AMRC-C165)</name>
    <dbReference type="NCBI Taxonomy" id="273075"/>
    <lineage>
        <taxon>Archaea</taxon>
        <taxon>Methanobacteriati</taxon>
        <taxon>Thermoplasmatota</taxon>
        <taxon>Thermoplasmata</taxon>
        <taxon>Thermoplasmatales</taxon>
        <taxon>Thermoplasmataceae</taxon>
        <taxon>Thermoplasma</taxon>
    </lineage>
</organism>
<protein>
    <recommendedName>
        <fullName evidence="1">DNA/RNA-binding protein Alba</fullName>
    </recommendedName>
</protein>
<name>ALBA_THEAC</name>
<feature type="chain" id="PRO_0000151716" description="DNA/RNA-binding protein Alba">
    <location>
        <begin position="1"/>
        <end position="89"/>
    </location>
</feature>
<feature type="modified residue" description="N6-acetyllysine" evidence="1">
    <location>
        <position position="11"/>
    </location>
</feature>
<dbReference type="EMBL" id="AL445065">
    <property type="protein sequence ID" value="CAC12041.1"/>
    <property type="molecule type" value="Genomic_DNA"/>
</dbReference>
<dbReference type="RefSeq" id="WP_010901321.1">
    <property type="nucleotide sequence ID" value="NC_002578.1"/>
</dbReference>
<dbReference type="SMR" id="Q9HJQ5"/>
<dbReference type="STRING" id="273075.gene:9572127"/>
<dbReference type="PaxDb" id="273075-Ta0912"/>
<dbReference type="EnsemblBacteria" id="CAC12041">
    <property type="protein sequence ID" value="CAC12041"/>
    <property type="gene ID" value="CAC12041"/>
</dbReference>
<dbReference type="KEGG" id="tac:Ta0912"/>
<dbReference type="eggNOG" id="arCOG01753">
    <property type="taxonomic scope" value="Archaea"/>
</dbReference>
<dbReference type="HOGENOM" id="CLU_110989_1_0_2"/>
<dbReference type="InParanoid" id="Q9HJQ5"/>
<dbReference type="OrthoDB" id="10360at2157"/>
<dbReference type="Proteomes" id="UP000001024">
    <property type="component" value="Chromosome"/>
</dbReference>
<dbReference type="GO" id="GO:0005694">
    <property type="term" value="C:chromosome"/>
    <property type="evidence" value="ECO:0007669"/>
    <property type="project" value="UniProtKB-SubCell"/>
</dbReference>
<dbReference type="GO" id="GO:0005737">
    <property type="term" value="C:cytoplasm"/>
    <property type="evidence" value="ECO:0007669"/>
    <property type="project" value="UniProtKB-SubCell"/>
</dbReference>
<dbReference type="GO" id="GO:0003690">
    <property type="term" value="F:double-stranded DNA binding"/>
    <property type="evidence" value="ECO:0007669"/>
    <property type="project" value="UniProtKB-UniRule"/>
</dbReference>
<dbReference type="GO" id="GO:0003723">
    <property type="term" value="F:RNA binding"/>
    <property type="evidence" value="ECO:0007669"/>
    <property type="project" value="InterPro"/>
</dbReference>
<dbReference type="GO" id="GO:0030261">
    <property type="term" value="P:chromosome condensation"/>
    <property type="evidence" value="ECO:0007669"/>
    <property type="project" value="UniProtKB-KW"/>
</dbReference>
<dbReference type="Gene3D" id="3.30.110.20">
    <property type="entry name" value="Alba-like domain"/>
    <property type="match status" value="1"/>
</dbReference>
<dbReference type="HAMAP" id="MF_01122">
    <property type="entry name" value="AlbA"/>
    <property type="match status" value="1"/>
</dbReference>
<dbReference type="InterPro" id="IPR036882">
    <property type="entry name" value="Alba-like_dom_sf"/>
</dbReference>
<dbReference type="InterPro" id="IPR013795">
    <property type="entry name" value="DNA/RNA-bd_Alba"/>
</dbReference>
<dbReference type="InterPro" id="IPR002775">
    <property type="entry name" value="DNA/RNA-bd_Alba-like"/>
</dbReference>
<dbReference type="NCBIfam" id="TIGR00285">
    <property type="entry name" value="DNA-binding protein Alba"/>
    <property type="match status" value="1"/>
</dbReference>
<dbReference type="NCBIfam" id="NF003088">
    <property type="entry name" value="PRK04015.1"/>
    <property type="match status" value="1"/>
</dbReference>
<dbReference type="Pfam" id="PF01918">
    <property type="entry name" value="Alba"/>
    <property type="match status" value="1"/>
</dbReference>
<dbReference type="PIRSF" id="PIRSF028732">
    <property type="entry name" value="Alba"/>
    <property type="match status" value="1"/>
</dbReference>
<dbReference type="SUPFAM" id="SSF82704">
    <property type="entry name" value="AlbA-like"/>
    <property type="match status" value="1"/>
</dbReference>
<proteinExistence type="inferred from homology"/>
<gene>
    <name evidence="1" type="primary">albA</name>
    <name type="ordered locus">Ta0912</name>
</gene>
<reference key="1">
    <citation type="journal article" date="2000" name="Nature">
        <title>The genome sequence of the thermoacidophilic scavenger Thermoplasma acidophilum.</title>
        <authorList>
            <person name="Ruepp A."/>
            <person name="Graml W."/>
            <person name="Santos-Martinez M.-L."/>
            <person name="Koretke K.K."/>
            <person name="Volker C."/>
            <person name="Mewes H.-W."/>
            <person name="Frishman D."/>
            <person name="Stocker S."/>
            <person name="Lupas A.N."/>
            <person name="Baumeister W."/>
        </authorList>
    </citation>
    <scope>NUCLEOTIDE SEQUENCE [LARGE SCALE GENOMIC DNA]</scope>
    <source>
        <strain>ATCC 25905 / DSM 1728 / JCM 9062 / NBRC 15155 / AMRC-C165</strain>
    </source>
</reference>
<accession>Q9HJQ5</accession>
<comment type="function">
    <text evidence="1">Binds double-stranded DNA tightly but without sequence specificity. Involved in DNA compaction.</text>
</comment>
<comment type="subcellular location">
    <subcellularLocation>
        <location evidence="1">Cytoplasm</location>
    </subcellularLocation>
    <subcellularLocation>
        <location evidence="1">Chromosome</location>
    </subcellularLocation>
</comment>
<comment type="PTM">
    <text evidence="1">Acetylated. Acetylation at Lys-11 decreases DNA-binding affinity.</text>
</comment>
<comment type="similarity">
    <text evidence="1">Belongs to the histone-like Alba family.</text>
</comment>
<sequence>MAEENIIFVGKKPTMNYVLAVVTQFNNNANKIIIKARGKTISKAVDVAEITRHKFIPDAKYEEIKLDTETLQGERGSSNVSSIEITLSR</sequence>
<keyword id="KW-0007">Acetylation</keyword>
<keyword id="KW-0158">Chromosome</keyword>
<keyword id="KW-0963">Cytoplasm</keyword>
<keyword id="KW-0226">DNA condensation</keyword>
<keyword id="KW-0238">DNA-binding</keyword>
<keyword id="KW-1185">Reference proteome</keyword>